<name>P66B_HUMAN</name>
<protein>
    <recommendedName>
        <fullName>Transcriptional repressor p66-beta</fullName>
    </recommendedName>
    <alternativeName>
        <fullName>GATA zinc finger domain-containing protein 2B</fullName>
    </alternativeName>
    <alternativeName>
        <fullName>p66/p68</fullName>
    </alternativeName>
</protein>
<gene>
    <name type="primary">GATAD2B</name>
    <name type="synonym">KIAA1150</name>
</gene>
<keyword id="KW-0158">Chromosome</keyword>
<keyword id="KW-0175">Coiled coil</keyword>
<keyword id="KW-0991">Intellectual disability</keyword>
<keyword id="KW-1017">Isopeptide bond</keyword>
<keyword id="KW-0479">Metal-binding</keyword>
<keyword id="KW-0539">Nucleus</keyword>
<keyword id="KW-0597">Phosphoprotein</keyword>
<keyword id="KW-1267">Proteomics identification</keyword>
<keyword id="KW-1185">Reference proteome</keyword>
<keyword id="KW-0678">Repressor</keyword>
<keyword id="KW-0804">Transcription</keyword>
<keyword id="KW-0805">Transcription regulation</keyword>
<keyword id="KW-0832">Ubl conjugation</keyword>
<keyword id="KW-0862">Zinc</keyword>
<keyword id="KW-0863">Zinc-finger</keyword>
<proteinExistence type="evidence at protein level"/>
<reference key="1">
    <citation type="journal article" date="2002" name="Mol. Cell. Biol.">
        <title>Identification and functional characterization of the p66/p68 components of the MeCP1 complex.</title>
        <authorList>
            <person name="Feng Q."/>
            <person name="Cao R."/>
            <person name="Xia L."/>
            <person name="Erdjument-Bromage H."/>
            <person name="Tempst P."/>
            <person name="Zhang Y."/>
        </authorList>
    </citation>
    <scope>NUCLEOTIDE SEQUENCE [MRNA]</scope>
    <scope>FUNCTION</scope>
    <scope>IDENTIFICATION BY MASS SPECTROMETRY</scope>
    <scope>INTERACTION WITH MBD2; MBD3 AND THE MECP1 COMPLEX</scope>
    <scope>SUBCELLULAR LOCATION</scope>
</reference>
<reference key="2">
    <citation type="journal article" date="2006" name="Nature">
        <title>The DNA sequence and biological annotation of human chromosome 1.</title>
        <authorList>
            <person name="Gregory S.G."/>
            <person name="Barlow K.F."/>
            <person name="McLay K.E."/>
            <person name="Kaul R."/>
            <person name="Swarbreck D."/>
            <person name="Dunham A."/>
            <person name="Scott C.E."/>
            <person name="Howe K.L."/>
            <person name="Woodfine K."/>
            <person name="Spencer C.C.A."/>
            <person name="Jones M.C."/>
            <person name="Gillson C."/>
            <person name="Searle S."/>
            <person name="Zhou Y."/>
            <person name="Kokocinski F."/>
            <person name="McDonald L."/>
            <person name="Evans R."/>
            <person name="Phillips K."/>
            <person name="Atkinson A."/>
            <person name="Cooper R."/>
            <person name="Jones C."/>
            <person name="Hall R.E."/>
            <person name="Andrews T.D."/>
            <person name="Lloyd C."/>
            <person name="Ainscough R."/>
            <person name="Almeida J.P."/>
            <person name="Ambrose K.D."/>
            <person name="Anderson F."/>
            <person name="Andrew R.W."/>
            <person name="Ashwell R.I.S."/>
            <person name="Aubin K."/>
            <person name="Babbage A.K."/>
            <person name="Bagguley C.L."/>
            <person name="Bailey J."/>
            <person name="Beasley H."/>
            <person name="Bethel G."/>
            <person name="Bird C.P."/>
            <person name="Bray-Allen S."/>
            <person name="Brown J.Y."/>
            <person name="Brown A.J."/>
            <person name="Buckley D."/>
            <person name="Burton J."/>
            <person name="Bye J."/>
            <person name="Carder C."/>
            <person name="Chapman J.C."/>
            <person name="Clark S.Y."/>
            <person name="Clarke G."/>
            <person name="Clee C."/>
            <person name="Cobley V."/>
            <person name="Collier R.E."/>
            <person name="Corby N."/>
            <person name="Coville G.J."/>
            <person name="Davies J."/>
            <person name="Deadman R."/>
            <person name="Dunn M."/>
            <person name="Earthrowl M."/>
            <person name="Ellington A.G."/>
            <person name="Errington H."/>
            <person name="Frankish A."/>
            <person name="Frankland J."/>
            <person name="French L."/>
            <person name="Garner P."/>
            <person name="Garnett J."/>
            <person name="Gay L."/>
            <person name="Ghori M.R.J."/>
            <person name="Gibson R."/>
            <person name="Gilby L.M."/>
            <person name="Gillett W."/>
            <person name="Glithero R.J."/>
            <person name="Grafham D.V."/>
            <person name="Griffiths C."/>
            <person name="Griffiths-Jones S."/>
            <person name="Grocock R."/>
            <person name="Hammond S."/>
            <person name="Harrison E.S.I."/>
            <person name="Hart E."/>
            <person name="Haugen E."/>
            <person name="Heath P.D."/>
            <person name="Holmes S."/>
            <person name="Holt K."/>
            <person name="Howden P.J."/>
            <person name="Hunt A.R."/>
            <person name="Hunt S.E."/>
            <person name="Hunter G."/>
            <person name="Isherwood J."/>
            <person name="James R."/>
            <person name="Johnson C."/>
            <person name="Johnson D."/>
            <person name="Joy A."/>
            <person name="Kay M."/>
            <person name="Kershaw J.K."/>
            <person name="Kibukawa M."/>
            <person name="Kimberley A.M."/>
            <person name="King A."/>
            <person name="Knights A.J."/>
            <person name="Lad H."/>
            <person name="Laird G."/>
            <person name="Lawlor S."/>
            <person name="Leongamornlert D.A."/>
            <person name="Lloyd D.M."/>
            <person name="Loveland J."/>
            <person name="Lovell J."/>
            <person name="Lush M.J."/>
            <person name="Lyne R."/>
            <person name="Martin S."/>
            <person name="Mashreghi-Mohammadi M."/>
            <person name="Matthews L."/>
            <person name="Matthews N.S.W."/>
            <person name="McLaren S."/>
            <person name="Milne S."/>
            <person name="Mistry S."/>
            <person name="Moore M.J.F."/>
            <person name="Nickerson T."/>
            <person name="O'Dell C.N."/>
            <person name="Oliver K."/>
            <person name="Palmeiri A."/>
            <person name="Palmer S.A."/>
            <person name="Parker A."/>
            <person name="Patel D."/>
            <person name="Pearce A.V."/>
            <person name="Peck A.I."/>
            <person name="Pelan S."/>
            <person name="Phelps K."/>
            <person name="Phillimore B.J."/>
            <person name="Plumb R."/>
            <person name="Rajan J."/>
            <person name="Raymond C."/>
            <person name="Rouse G."/>
            <person name="Saenphimmachak C."/>
            <person name="Sehra H.K."/>
            <person name="Sheridan E."/>
            <person name="Shownkeen R."/>
            <person name="Sims S."/>
            <person name="Skuce C.D."/>
            <person name="Smith M."/>
            <person name="Steward C."/>
            <person name="Subramanian S."/>
            <person name="Sycamore N."/>
            <person name="Tracey A."/>
            <person name="Tromans A."/>
            <person name="Van Helmond Z."/>
            <person name="Wall M."/>
            <person name="Wallis J.M."/>
            <person name="White S."/>
            <person name="Whitehead S.L."/>
            <person name="Wilkinson J.E."/>
            <person name="Willey D.L."/>
            <person name="Williams H."/>
            <person name="Wilming L."/>
            <person name="Wray P.W."/>
            <person name="Wu Z."/>
            <person name="Coulson A."/>
            <person name="Vaudin M."/>
            <person name="Sulston J.E."/>
            <person name="Durbin R.M."/>
            <person name="Hubbard T."/>
            <person name="Wooster R."/>
            <person name="Dunham I."/>
            <person name="Carter N.P."/>
            <person name="McVean G."/>
            <person name="Ross M.T."/>
            <person name="Harrow J."/>
            <person name="Olson M.V."/>
            <person name="Beck S."/>
            <person name="Rogers J."/>
            <person name="Bentley D.R."/>
        </authorList>
    </citation>
    <scope>NUCLEOTIDE SEQUENCE [LARGE SCALE GENOMIC DNA]</scope>
</reference>
<reference key="3">
    <citation type="submission" date="2005-09" db="EMBL/GenBank/DDBJ databases">
        <authorList>
            <person name="Mural R.J."/>
            <person name="Istrail S."/>
            <person name="Sutton G.G."/>
            <person name="Florea L."/>
            <person name="Halpern A.L."/>
            <person name="Mobarry C.M."/>
            <person name="Lippert R."/>
            <person name="Walenz B."/>
            <person name="Shatkay H."/>
            <person name="Dew I."/>
            <person name="Miller J.R."/>
            <person name="Flanigan M.J."/>
            <person name="Edwards N.J."/>
            <person name="Bolanos R."/>
            <person name="Fasulo D."/>
            <person name="Halldorsson B.V."/>
            <person name="Hannenhalli S."/>
            <person name="Turner R."/>
            <person name="Yooseph S."/>
            <person name="Lu F."/>
            <person name="Nusskern D.R."/>
            <person name="Shue B.C."/>
            <person name="Zheng X.H."/>
            <person name="Zhong F."/>
            <person name="Delcher A.L."/>
            <person name="Huson D.H."/>
            <person name="Kravitz S.A."/>
            <person name="Mouchard L."/>
            <person name="Reinert K."/>
            <person name="Remington K.A."/>
            <person name="Clark A.G."/>
            <person name="Waterman M.S."/>
            <person name="Eichler E.E."/>
            <person name="Adams M.D."/>
            <person name="Hunkapiller M.W."/>
            <person name="Myers E.W."/>
            <person name="Venter J.C."/>
        </authorList>
    </citation>
    <scope>NUCLEOTIDE SEQUENCE [LARGE SCALE GENOMIC DNA]</scope>
</reference>
<reference key="4">
    <citation type="journal article" date="2004" name="Genome Res.">
        <title>The status, quality, and expansion of the NIH full-length cDNA project: the Mammalian Gene Collection (MGC).</title>
        <authorList>
            <consortium name="The MGC Project Team"/>
        </authorList>
    </citation>
    <scope>NUCLEOTIDE SEQUENCE [LARGE SCALE MRNA]</scope>
    <source>
        <tissue>Lung</tissue>
    </source>
</reference>
<reference key="5">
    <citation type="journal article" date="1999" name="DNA Res.">
        <title>Characterization of cDNA clones selected by the GeneMark analysis from size-fractionated cDNA libraries from human brain.</title>
        <authorList>
            <person name="Hirosawa M."/>
            <person name="Nagase T."/>
            <person name="Ishikawa K."/>
            <person name="Kikuno R."/>
            <person name="Nomura N."/>
            <person name="Ohara O."/>
        </authorList>
    </citation>
    <scope>NUCLEOTIDE SEQUENCE [LARGE SCALE MRNA] OF 95-593</scope>
    <source>
        <tissue>Brain</tissue>
    </source>
</reference>
<reference key="6">
    <citation type="journal article" date="2002" name="J. Biol. Chem.">
        <title>Two highly related p66 proteins comprise a new family of potent transcriptional repressors interacting with MBD2 and MBD3.</title>
        <authorList>
            <person name="Brackertz M."/>
            <person name="Boeke J."/>
            <person name="Zhang R."/>
            <person name="Renkawitz R."/>
        </authorList>
    </citation>
    <scope>FUNCTION</scope>
    <scope>INTERACTION WITH MBD2 AND MBD3</scope>
    <scope>SUBCELLULAR LOCATION</scope>
    <scope>TISSUE SPECIFICITY</scope>
    <scope>DOMAIN CR1</scope>
</reference>
<reference key="7">
    <citation type="journal article" date="2006" name="Mol. Cell. Biol.">
        <title>MBD2/NuRD and MBD3/NuRD, two distinct complexes with different biochemical and functional properties.</title>
        <authorList>
            <person name="Le Guezennec X."/>
            <person name="Vermeulen M."/>
            <person name="Brinkman A.B."/>
            <person name="Hoeijmakers W.A."/>
            <person name="Cohen A."/>
            <person name="Lasonder E."/>
            <person name="Stunnenberg H.G."/>
        </authorList>
    </citation>
    <scope>FUNCTION</scope>
    <scope>IDENTIFICATION IN THE NURD COMPLEX</scope>
    <scope>IDENTIFICATION BY MASS SPECTROMETRY</scope>
</reference>
<reference key="8">
    <citation type="journal article" date="2006" name="Nat. Biotechnol.">
        <title>A probability-based approach for high-throughput protein phosphorylation analysis and site localization.</title>
        <authorList>
            <person name="Beausoleil S.A."/>
            <person name="Villen J."/>
            <person name="Gerber S.A."/>
            <person name="Rush J."/>
            <person name="Gygi S.P."/>
        </authorList>
    </citation>
    <scope>PHOSPHORYLATION [LARGE SCALE ANALYSIS] AT SER-486</scope>
    <scope>IDENTIFICATION BY MASS SPECTROMETRY [LARGE SCALE ANALYSIS]</scope>
    <source>
        <tissue>Cervix carcinoma</tissue>
    </source>
</reference>
<reference key="9">
    <citation type="journal article" date="2006" name="Nucleic Acids Res.">
        <title>p66alpha and p66beta of the Mi-2/NuRD complex mediate MBD2 and histone interaction.</title>
        <authorList>
            <person name="Brackertz M."/>
            <person name="Gong Z."/>
            <person name="Leers J."/>
            <person name="Renkawitz R."/>
        </authorList>
    </citation>
    <scope>FUNCTION</scope>
    <scope>INTERACTION WITH MBD2 AND HISTONE TAILS</scope>
    <scope>SUBCELLULAR LOCATION</scope>
    <scope>DOMAINS CR1 AND CR2</scope>
</reference>
<reference key="10">
    <citation type="journal article" date="2007" name="J. Proteome Res.">
        <title>Improved titanium dioxide enrichment of phosphopeptides from HeLa cells and high confident phosphopeptide identification by cross-validation of MS/MS and MS/MS/MS spectra.</title>
        <authorList>
            <person name="Yu L.R."/>
            <person name="Zhu Z."/>
            <person name="Chan K.C."/>
            <person name="Issaq H.J."/>
            <person name="Dimitrov D.S."/>
            <person name="Veenstra T.D."/>
        </authorList>
    </citation>
    <scope>IDENTIFICATION BY MASS SPECTROMETRY [LARGE SCALE ANALYSIS]</scope>
    <source>
        <tissue>Cervix carcinoma</tissue>
    </source>
</reference>
<reference key="11">
    <citation type="journal article" date="2008" name="J. Proteome Res.">
        <title>Combining protein-based IMAC, peptide-based IMAC, and MudPIT for efficient phosphoproteomic analysis.</title>
        <authorList>
            <person name="Cantin G.T."/>
            <person name="Yi W."/>
            <person name="Lu B."/>
            <person name="Park S.K."/>
            <person name="Xu T."/>
            <person name="Lee J.-D."/>
            <person name="Yates J.R. III"/>
        </authorList>
    </citation>
    <scope>IDENTIFICATION BY MASS SPECTROMETRY [LARGE SCALE ANALYSIS]</scope>
    <source>
        <tissue>Cervix carcinoma</tissue>
    </source>
</reference>
<reference key="12">
    <citation type="journal article" date="2008" name="Proc. Natl. Acad. Sci. U.S.A.">
        <title>A quantitative atlas of mitotic phosphorylation.</title>
        <authorList>
            <person name="Dephoure N."/>
            <person name="Zhou C."/>
            <person name="Villen J."/>
            <person name="Beausoleil S.A."/>
            <person name="Bakalarski C.E."/>
            <person name="Elledge S.J."/>
            <person name="Gygi S.P."/>
        </authorList>
    </citation>
    <scope>PHOSPHORYLATION [LARGE SCALE ANALYSIS] AT THR-120; SER-122; SER-129; SER-134; SER-135; SER-333 AND SER-486</scope>
    <scope>IDENTIFICATION BY MASS SPECTROMETRY [LARGE SCALE ANALYSIS]</scope>
    <source>
        <tissue>Cervix carcinoma</tissue>
    </source>
</reference>
<reference key="13">
    <citation type="journal article" date="2009" name="Anal. Chem.">
        <title>Lys-N and trypsin cover complementary parts of the phosphoproteome in a refined SCX-based approach.</title>
        <authorList>
            <person name="Gauci S."/>
            <person name="Helbig A.O."/>
            <person name="Slijper M."/>
            <person name="Krijgsveld J."/>
            <person name="Heck A.J."/>
            <person name="Mohammed S."/>
        </authorList>
    </citation>
    <scope>IDENTIFICATION BY MASS SPECTROMETRY [LARGE SCALE ANALYSIS]</scope>
</reference>
<reference key="14">
    <citation type="journal article" date="2009" name="Sci. Signal.">
        <title>Quantitative phosphoproteomic analysis of T cell receptor signaling reveals system-wide modulation of protein-protein interactions.</title>
        <authorList>
            <person name="Mayya V."/>
            <person name="Lundgren D.H."/>
            <person name="Hwang S.-I."/>
            <person name="Rezaul K."/>
            <person name="Wu L."/>
            <person name="Eng J.K."/>
            <person name="Rodionov V."/>
            <person name="Han D.K."/>
        </authorList>
    </citation>
    <scope>PHOSPHORYLATION [LARGE SCALE ANALYSIS] AT THR-120; SER-122; SER-129; SER-134 AND SER-135</scope>
    <scope>IDENTIFICATION BY MASS SPECTROMETRY [LARGE SCALE ANALYSIS]</scope>
    <source>
        <tissue>Leukemic T-cell</tissue>
    </source>
</reference>
<reference key="15">
    <citation type="journal article" date="2010" name="Sci. Signal.">
        <title>Quantitative phosphoproteomics reveals widespread full phosphorylation site occupancy during mitosis.</title>
        <authorList>
            <person name="Olsen J.V."/>
            <person name="Vermeulen M."/>
            <person name="Santamaria A."/>
            <person name="Kumar C."/>
            <person name="Miller M.L."/>
            <person name="Jensen L.J."/>
            <person name="Gnad F."/>
            <person name="Cox J."/>
            <person name="Jensen T.S."/>
            <person name="Nigg E.A."/>
            <person name="Brunak S."/>
            <person name="Mann M."/>
        </authorList>
    </citation>
    <scope>PHOSPHORYLATION [LARGE SCALE ANALYSIS] AT THR-120; SER-122; SER-129; SER-135; SER-338 AND SER-486</scope>
    <scope>IDENTIFICATION BY MASS SPECTROMETRY [LARGE SCALE ANALYSIS]</scope>
    <source>
        <tissue>Cervix carcinoma</tissue>
    </source>
</reference>
<reference key="16">
    <citation type="journal article" date="2011" name="BMC Syst. Biol.">
        <title>Initial characterization of the human central proteome.</title>
        <authorList>
            <person name="Burkard T.R."/>
            <person name="Planyavsky M."/>
            <person name="Kaupe I."/>
            <person name="Breitwieser F.P."/>
            <person name="Buerckstuemmer T."/>
            <person name="Bennett K.L."/>
            <person name="Superti-Furga G."/>
            <person name="Colinge J."/>
        </authorList>
    </citation>
    <scope>IDENTIFICATION BY MASS SPECTROMETRY [LARGE SCALE ANALYSIS]</scope>
</reference>
<reference key="17">
    <citation type="journal article" date="2011" name="Sci. Signal.">
        <title>System-wide temporal characterization of the proteome and phosphoproteome of human embryonic stem cell differentiation.</title>
        <authorList>
            <person name="Rigbolt K.T."/>
            <person name="Prokhorova T.A."/>
            <person name="Akimov V."/>
            <person name="Henningsen J."/>
            <person name="Johansen P.T."/>
            <person name="Kratchmarova I."/>
            <person name="Kassem M."/>
            <person name="Mann M."/>
            <person name="Olsen J.V."/>
            <person name="Blagoev B."/>
        </authorList>
    </citation>
    <scope>PHOSPHORYLATION [LARGE SCALE ANALYSIS] AT THR-120; SER-122 AND SER-129</scope>
    <scope>IDENTIFICATION BY MASS SPECTROMETRY [LARGE SCALE ANALYSIS]</scope>
</reference>
<reference key="18">
    <citation type="journal article" date="2013" name="J. Med. Genet.">
        <title>GATAD2B loss-of-function mutations cause a recognisable syndrome with intellectual disability and are associated with learning deficits and synaptic undergrowth in Drosophila.</title>
        <authorList>
            <person name="Willemsen M.H."/>
            <person name="Nijhof B."/>
            <person name="Fenckova M."/>
            <person name="Nillesen W.M."/>
            <person name="Bongers E.M."/>
            <person name="Castells-Nobau A."/>
            <person name="Asztalos L."/>
            <person name="Viragh E."/>
            <person name="van Bon B.W."/>
            <person name="Tezel E."/>
            <person name="Veltman J.A."/>
            <person name="Brunner H.G."/>
            <person name="de Vries B.B."/>
            <person name="de Ligt J."/>
            <person name="Yntema H.G."/>
            <person name="van Bokhoven H."/>
            <person name="Isidor B."/>
            <person name="Le Caignec C."/>
            <person name="Lorino E."/>
            <person name="Asztalos Z."/>
            <person name="Koolen D.A."/>
            <person name="Vissers L.E."/>
            <person name="Schenck A."/>
            <person name="Kleefstra T."/>
        </authorList>
    </citation>
    <scope>INVOLVEMENT IN GAND</scope>
    <scope>FUNCTION</scope>
</reference>
<reference key="19">
    <citation type="journal article" date="2012" name="N. Engl. J. Med.">
        <title>Diagnostic exome sequencing in persons with severe intellectual disability.</title>
        <authorList>
            <person name="de Ligt J."/>
            <person name="Willemsen M.H."/>
            <person name="van Bon B.W."/>
            <person name="Kleefstra T."/>
            <person name="Yntema H.G."/>
            <person name="Kroes T."/>
            <person name="Vulto-van Silfhout A.T."/>
            <person name="Koolen D.A."/>
            <person name="de Vries P."/>
            <person name="Gilissen C."/>
            <person name="del Rosario M."/>
            <person name="Hoischen A."/>
            <person name="Scheffer H."/>
            <person name="de Vries B.B."/>
            <person name="Brunner H.G."/>
            <person name="Veltman J.A."/>
            <person name="Vissers L.E."/>
        </authorList>
    </citation>
    <scope>INVOLVEMENT IN GAND</scope>
    <scope>VARIANTS VAL-316 AND LEU-586</scope>
</reference>
<reference key="20">
    <citation type="journal article" date="2013" name="J. Proteome Res.">
        <title>Toward a comprehensive characterization of a human cancer cell phosphoproteome.</title>
        <authorList>
            <person name="Zhou H."/>
            <person name="Di Palma S."/>
            <person name="Preisinger C."/>
            <person name="Peng M."/>
            <person name="Polat A.N."/>
            <person name="Heck A.J."/>
            <person name="Mohammed S."/>
        </authorList>
    </citation>
    <scope>PHOSPHORYLATION [LARGE SCALE ANALYSIS] AT SER-17; THR-120; SER-122; SER-129; SER-135; SER-208; SER-338 AND SER-486</scope>
    <scope>IDENTIFICATION BY MASS SPECTROMETRY [LARGE SCALE ANALYSIS]</scope>
    <source>
        <tissue>Cervix carcinoma</tissue>
        <tissue>Erythroleukemia</tissue>
    </source>
</reference>
<reference key="21">
    <citation type="journal article" date="2014" name="J. Proteomics">
        <title>An enzyme assisted RP-RPLC approach for in-depth analysis of human liver phosphoproteome.</title>
        <authorList>
            <person name="Bian Y."/>
            <person name="Song C."/>
            <person name="Cheng K."/>
            <person name="Dong M."/>
            <person name="Wang F."/>
            <person name="Huang J."/>
            <person name="Sun D."/>
            <person name="Wang L."/>
            <person name="Ye M."/>
            <person name="Zou H."/>
        </authorList>
    </citation>
    <scope>IDENTIFICATION BY MASS SPECTROMETRY [LARGE SCALE ANALYSIS]</scope>
    <source>
        <tissue>Liver</tissue>
    </source>
</reference>
<reference key="22">
    <citation type="journal article" date="2014" name="Nat. Struct. Mol. Biol.">
        <title>Uncovering global SUMOylation signaling networks in a site-specific manner.</title>
        <authorList>
            <person name="Hendriks I.A."/>
            <person name="D'Souza R.C."/>
            <person name="Yang B."/>
            <person name="Verlaan-de Vries M."/>
            <person name="Mann M."/>
            <person name="Vertegaal A.C."/>
        </authorList>
    </citation>
    <scope>SUMOYLATION [LARGE SCALE ANALYSIS] AT LYS-498</scope>
    <scope>IDENTIFICATION BY MASS SPECTROMETRY [LARGE SCALE ANALYSIS]</scope>
</reference>
<reference key="23">
    <citation type="journal article" date="2015" name="Cell Rep.">
        <title>SUMO-2 orchestrates chromatin modifiers in response to DNA damage.</title>
        <authorList>
            <person name="Hendriks I.A."/>
            <person name="Treffers L.W."/>
            <person name="Verlaan-de Vries M."/>
            <person name="Olsen J.V."/>
            <person name="Vertegaal A.C."/>
        </authorList>
    </citation>
    <scope>SUMOYLATION [LARGE SCALE ANALYSIS] AT LYS-498</scope>
    <scope>IDENTIFICATION BY MASS SPECTROMETRY [LARGE SCALE ANALYSIS]</scope>
</reference>
<reference key="24">
    <citation type="journal article" date="2015" name="PLoS ONE">
        <title>Identification of Novel Proteins Co-Purifying with Cockayne Syndrome Group B (CSB) Reveals Potential Roles for CSB in RNA Metabolism and Chromatin Dynamics.</title>
        <authorList>
            <person name="Nicolai S."/>
            <person name="Filippi S."/>
            <person name="Caputo M."/>
            <person name="Cipak L."/>
            <person name="Gregan J."/>
            <person name="Ammerer G."/>
            <person name="Frontini M."/>
            <person name="Willems D."/>
            <person name="Prantera G."/>
            <person name="Balajee A.S."/>
            <person name="Proietti-De-Santis L."/>
        </authorList>
    </citation>
    <scope>INTERACTION WITH ERCC6</scope>
</reference>
<reference key="25">
    <citation type="journal article" date="2016" name="Cell Rep.">
        <title>ZMYND8 Co-localizes with NuRD on Target Genes and Regulates Poly(ADP-Ribose)-Dependent Recruitment of GATAD2A/NuRD to Sites of DNA Damage.</title>
        <authorList>
            <person name="Spruijt C.G."/>
            <person name="Luijsterburg M.S."/>
            <person name="Menafra R."/>
            <person name="Lindeboom R.G."/>
            <person name="Jansen P.W."/>
            <person name="Edupuganti R.R."/>
            <person name="Baltissen M.P."/>
            <person name="Wiegant W.W."/>
            <person name="Voelker-Albert M.C."/>
            <person name="Matarese F."/>
            <person name="Mensinga A."/>
            <person name="Poser I."/>
            <person name="Vos H.R."/>
            <person name="Stunnenberg H.G."/>
            <person name="van Attikum H."/>
            <person name="Vermeulen M."/>
        </authorList>
    </citation>
    <scope>SUBUNIT</scope>
    <scope>INTERACTION WITH MBD2 AND MBD3</scope>
    <scope>IDENTIFICATION IN THE NURD COMPLEX</scope>
    <scope>IDENTIFICATION BY MASS SPECTROMETRY</scope>
    <scope>SUBCELLULAR LOCATION</scope>
</reference>
<reference key="26">
    <citation type="journal article" date="2017" name="Nat. Struct. Mol. Biol.">
        <title>Site-specific mapping of the human SUMO proteome reveals co-modification with phosphorylation.</title>
        <authorList>
            <person name="Hendriks I.A."/>
            <person name="Lyon D."/>
            <person name="Young C."/>
            <person name="Jensen L.J."/>
            <person name="Vertegaal A.C."/>
            <person name="Nielsen M.L."/>
        </authorList>
    </citation>
    <scope>SUMOYLATION [LARGE SCALE ANALYSIS] AT LYS-33; LYS-66; LYS-97; LYS-147; LYS-199; LYS-281; LYS-353; LYS-454; LYS-467 AND LYS-498</scope>
    <scope>IDENTIFICATION BY MASS SPECTROMETRY [LARGE SCALE ANALYSIS]</scope>
</reference>
<reference key="27">
    <citation type="journal article" date="2017" name="Nucleic Acids Res.">
        <title>CHD3 and CHD4 form distinct NuRD complexes with different yet overlapping functionality.</title>
        <authorList>
            <person name="Hoffmeister H."/>
            <person name="Fuchs A."/>
            <person name="Erdel F."/>
            <person name="Pinz S."/>
            <person name="Groebner-Ferreira R."/>
            <person name="Bruckmann A."/>
            <person name="Deutzmann R."/>
            <person name="Schwartz U."/>
            <person name="Maldonado R."/>
            <person name="Huber C."/>
            <person name="Dendorfer A.S."/>
            <person name="Rippe K."/>
            <person name="Laengst G."/>
        </authorList>
    </citation>
    <scope>FUNCTION</scope>
    <scope>IDENTIFICATION IN THE NURD COMPLEX</scope>
    <scope>IDENTIFICATION BY MASS SPECTROMETRY</scope>
    <scope>SUBCELLULAR LOCATION</scope>
</reference>
<reference key="28">
    <citation type="journal article" date="2021" name="FEBS J.">
        <title>Cross-linking mass spectrometry reveals the structural topology of peripheral NuRD subunits relative to the core complex.</title>
        <authorList>
            <person name="Spruijt C.G."/>
            <person name="Graewe C."/>
            <person name="Kleinendorst S.C."/>
            <person name="Baltissen M.P.A."/>
            <person name="Vermeulen M."/>
        </authorList>
    </citation>
    <scope>IDENTIFICATION IN THE NURD COMPLEX</scope>
    <scope>IDENTIFICATION BY MASS SPECTROMETRY</scope>
    <scope>SUBCELLULAR LOCATION</scope>
</reference>
<sequence>MDRMTEDALRLNLLKRSLDPADERDDVLAKRLKMEGHEAMERLKMLALLKRKDLANLEVPHELPTKQDGSGVKGYEEKLNGNLRPHGDNRTAGRPGKENINDEPVDMSARRSEPERGRLTPSPDIIVLSDNEASSPRSSSRMEERLKAANLEMFKGKGIEERQQLIKQLRDELRLEEARLVLLKKLRQSQLQKENVVQKTPVVQNAASIVQPSPAHVGQQGLSKLPSRPGAQGVEPQNLRTLQGHSVIRSATNTTLPHMLMSQRVIAPNPAQLQGQRGPPKPGLVRTTTPNMNPAINYQPQSSSSVPCQRTTSSAIYMNLASHIQPGTVNRVSSPLPSPSAMTDAANSQAAAKLALRKQLEKTLLEIPPPKPPAPLLHFLPSAANSEFIYMVGLEEVVQSVIDSQGKSCASLLRVEPFVCAQCRTDFTPHWKQEKNGKILCEQCMTSNQKKALKAEHTNRLKNAFVKALQQEQEIEQRLQQQAALSPTTAPAVSSVSKQETIMRHHTLRQAPQPQSSLQRGIPTSARSMLSNFAQAPQLSVPGGLLGMPGVNIAYLNTGIGGHKGPSLADRQREYLLDMIPPRSISQSISGQK</sequence>
<feature type="chain" id="PRO_0000083502" description="Transcriptional repressor p66-beta">
    <location>
        <begin position="1"/>
        <end position="593"/>
    </location>
</feature>
<feature type="zinc finger region" description="GATA-type" evidence="3">
    <location>
        <begin position="414"/>
        <end position="467"/>
    </location>
</feature>
<feature type="region of interest" description="Disordered" evidence="4">
    <location>
        <begin position="62"/>
        <end position="123"/>
    </location>
</feature>
<feature type="region of interest" description="CR1; interaction with MBD2 and MBD3" evidence="6">
    <location>
        <begin position="165"/>
        <end position="195"/>
    </location>
</feature>
<feature type="region of interest" description="Disordered" evidence="4">
    <location>
        <begin position="213"/>
        <end position="235"/>
    </location>
</feature>
<feature type="region of interest" description="CR2; histone tail-binding" evidence="7">
    <location>
        <begin position="340"/>
        <end position="480"/>
    </location>
</feature>
<feature type="coiled-coil region" evidence="2">
    <location>
        <begin position="140"/>
        <end position="194"/>
    </location>
</feature>
<feature type="coiled-coil region" evidence="2">
    <location>
        <begin position="449"/>
        <end position="482"/>
    </location>
</feature>
<feature type="compositionally biased region" description="Basic and acidic residues" evidence="4">
    <location>
        <begin position="74"/>
        <end position="100"/>
    </location>
</feature>
<feature type="compositionally biased region" description="Basic and acidic residues" evidence="4">
    <location>
        <begin position="108"/>
        <end position="118"/>
    </location>
</feature>
<feature type="modified residue" description="Phosphoserine" evidence="20">
    <location>
        <position position="17"/>
    </location>
</feature>
<feature type="modified residue" description="Phosphothreonine" evidence="16 17 18 19 20">
    <location>
        <position position="120"/>
    </location>
</feature>
<feature type="modified residue" description="Phosphoserine" evidence="16 17 18 19 20">
    <location>
        <position position="122"/>
    </location>
</feature>
<feature type="modified residue" description="Phosphoserine" evidence="16 17 18 19 20">
    <location>
        <position position="129"/>
    </location>
</feature>
<feature type="modified residue" description="Phosphoserine" evidence="16 17">
    <location>
        <position position="134"/>
    </location>
</feature>
<feature type="modified residue" description="Phosphoserine" evidence="16 17 18 20">
    <location>
        <position position="135"/>
    </location>
</feature>
<feature type="modified residue" description="Phosphoserine" evidence="20">
    <location>
        <position position="208"/>
    </location>
</feature>
<feature type="modified residue" description="Phosphoserine" evidence="16">
    <location>
        <position position="333"/>
    </location>
</feature>
<feature type="modified residue" description="Phosphoserine" evidence="18 20">
    <location>
        <position position="338"/>
    </location>
</feature>
<feature type="modified residue" description="Phosphoserine" evidence="1">
    <location>
        <position position="340"/>
    </location>
</feature>
<feature type="modified residue" description="Phosphoserine" evidence="15 16 18 20">
    <location>
        <position position="486"/>
    </location>
</feature>
<feature type="cross-link" description="Glycyl lysine isopeptide (Lys-Gly) (interchain with G-Cter in SUMO2)" evidence="23">
    <location>
        <position position="33"/>
    </location>
</feature>
<feature type="cross-link" description="Glycyl lysine isopeptide (Lys-Gly) (interchain with G-Cter in SUMO2)" evidence="23">
    <location>
        <position position="66"/>
    </location>
</feature>
<feature type="cross-link" description="Glycyl lysine isopeptide (Lys-Gly) (interchain with G-Cter in SUMO2)" evidence="23">
    <location>
        <position position="97"/>
    </location>
</feature>
<feature type="cross-link" description="Glycyl lysine isopeptide (Lys-Gly) (interchain with G-Cter in SUMO2)" evidence="23">
    <location>
        <position position="147"/>
    </location>
</feature>
<feature type="cross-link" description="Glycyl lysine isopeptide (Lys-Gly) (interchain with G-Cter in SUMO2)" evidence="23">
    <location>
        <position position="199"/>
    </location>
</feature>
<feature type="cross-link" description="Glycyl lysine isopeptide (Lys-Gly) (interchain with G-Cter in SUMO2)" evidence="23">
    <location>
        <position position="281"/>
    </location>
</feature>
<feature type="cross-link" description="Glycyl lysine isopeptide (Lys-Gly) (interchain with G-Cter in SUMO2)" evidence="23">
    <location>
        <position position="353"/>
    </location>
</feature>
<feature type="cross-link" description="Glycyl lysine isopeptide (Lys-Gly) (interchain with G-Cter in SUMO2)" evidence="23">
    <location>
        <position position="454"/>
    </location>
</feature>
<feature type="cross-link" description="Glycyl lysine isopeptide (Lys-Gly) (interchain with G-Cter in SUMO2)" evidence="23">
    <location>
        <position position="467"/>
    </location>
</feature>
<feature type="cross-link" description="Glycyl lysine isopeptide (Lys-Gly) (interchain with G-Cter in SUMO2)" evidence="21 22 23">
    <location>
        <position position="498"/>
    </location>
</feature>
<feature type="sequence variant" id="VAR_069363" evidence="9">
    <original>I</original>
    <variation>V</variation>
    <location>
        <position position="316"/>
    </location>
</feature>
<feature type="sequence variant" id="VAR_069364" evidence="9">
    <original>S</original>
    <variation>L</variation>
    <location>
        <position position="586"/>
    </location>
</feature>
<accession>Q8WXI9</accession>
<accession>D3DUZ2</accession>
<accession>Q5VUR2</accession>
<accession>Q7LG68</accession>
<accession>Q9ULS0</accession>
<comment type="function">
    <text evidence="5 6 7 8 10 13">Transcriptional repressor (PubMed:12183469, PubMed:16415179). Acts as a component of the histone deacetylase NuRD complex which participates in the remodeling of chromatin (PubMed:16428440, PubMed:28977666). Enhances MBD2-mediated repression (PubMed:12183469, PubMed:16415179). Efficient repression requires the presence of GATAD2A (PubMed:16415179). Targets MBD3 to discrete loci in the nucleus (PubMed:11756549). May play a role in synapse development (PubMed:23644463).</text>
</comment>
<comment type="subunit">
    <text evidence="5 6 7 8 11 12 13 14">Homooligomer (PubMed:27732854). Component of the nucleosome remodeling and deacetylase (NuRD) repressor complex, composed of core proteins MTA1, MTA2, MTA3, RBBP4, RBBP7, HDAC1, HDAC2, MBD2, MBD3, and peripherally associated proteins CDK2AP1, CDK2AP2, GATAD2A, GATAD2B, CHD3, CHD4 and CHD5 (PubMed:16428440, PubMed:28977666, PubMed:33283408). The exact stoichiometry of the NuRD complex is unknown, and some subunits such as MBD2 and MBD3, GATAD2A and GATAD2B, and CHD3, CHD4 and CHD5 define mutually exclusive NuRD complexes (PubMed:16428440, PubMed:27732854, PubMed:28977666, PubMed:33283408). Interacts with MBD2; this is required for the enhancement of MBD2-mediated repression and for targeting to the chromatin (PubMed:11756549, PubMed:12183469, PubMed:16415179, PubMed:27732854). Interacts with MBD3 (PubMed:11756549, PubMed:12183469, PubMed:27732854). Component of the MeCP1 histone deacetylase complex (PubMed:11756549). Interacts with histone tails, including that of histones H2A, H2B, H3 and H4 (PubMed:16415179). Interacts with ERCC6 (PubMed:26030138).</text>
</comment>
<comment type="interaction">
    <interactant intactId="EBI-923440">
        <id>Q8WXI9</id>
    </interactant>
    <interactant intactId="EBI-739580">
        <id>Q13137</id>
        <label>CALCOCO2</label>
    </interactant>
    <organismsDiffer>false</organismsDiffer>
    <experiments>3</experiments>
</comment>
<comment type="interaction">
    <interactant intactId="EBI-923440">
        <id>Q8WXI9</id>
    </interactant>
    <interactant intactId="EBI-745859">
        <id>P55273</id>
        <label>CDKN2D</label>
    </interactant>
    <organismsDiffer>false</organismsDiffer>
    <experiments>3</experiments>
</comment>
<comment type="interaction">
    <interactant intactId="EBI-923440">
        <id>Q8WXI9</id>
    </interactant>
    <interactant intactId="EBI-739624">
        <id>Q8NHQ1</id>
        <label>CEP70</label>
    </interactant>
    <organismsDiffer>false</organismsDiffer>
    <experiments>3</experiments>
</comment>
<comment type="interaction">
    <interactant intactId="EBI-923440">
        <id>Q8WXI9</id>
    </interactant>
    <interactant intactId="EBI-529989">
        <id>Q9NRI5</id>
        <label>DISC1</label>
    </interactant>
    <organismsDiffer>false</organismsDiffer>
    <experiments>3</experiments>
</comment>
<comment type="interaction">
    <interactant intactId="EBI-923440">
        <id>Q8WXI9</id>
    </interactant>
    <interactant intactId="EBI-701903">
        <id>Q14192</id>
        <label>FHL2</label>
    </interactant>
    <organismsDiffer>false</organismsDiffer>
    <experiments>3</experiments>
</comment>
<comment type="interaction">
    <interactant intactId="EBI-923440">
        <id>Q8WXI9</id>
    </interactant>
    <interactant intactId="EBI-618309">
        <id>Q08379</id>
        <label>GOLGA2</label>
    </interactant>
    <organismsDiffer>false</organismsDiffer>
    <experiments>3</experiments>
</comment>
<comment type="interaction">
    <interactant intactId="EBI-923440">
        <id>Q8WXI9</id>
    </interactant>
    <interactant intactId="EBI-347538">
        <id>Q9Y4H4</id>
        <label>GPSM3</label>
    </interactant>
    <organismsDiffer>false</organismsDiffer>
    <experiments>3</experiments>
</comment>
<comment type="interaction">
    <interactant intactId="EBI-923440">
        <id>Q8WXI9</id>
    </interactant>
    <interactant intactId="EBI-1783068">
        <id>O95983</id>
        <label>MBD3</label>
    </interactant>
    <organismsDiffer>false</organismsDiffer>
    <experiments>7</experiments>
</comment>
<comment type="interaction">
    <interactant intactId="EBI-923440">
        <id>Q8WXI9</id>
    </interactant>
    <interactant intactId="EBI-10311409">
        <id>Q9NPG2</id>
        <label>NGB</label>
    </interactant>
    <organismsDiffer>false</organismsDiffer>
    <experiments>3</experiments>
</comment>
<comment type="interaction">
    <interactant intactId="EBI-923440">
        <id>Q8WXI9</id>
    </interactant>
    <interactant intactId="EBI-744782">
        <id>Q9Y5B8</id>
        <label>NME7</label>
    </interactant>
    <organismsDiffer>false</organismsDiffer>
    <experiments>3</experiments>
</comment>
<comment type="interaction">
    <interactant intactId="EBI-923440">
        <id>Q8WXI9</id>
    </interactant>
    <interactant intactId="EBI-12025760">
        <id>Q86UR1-2</id>
        <label>NOXA1</label>
    </interactant>
    <organismsDiffer>false</organismsDiffer>
    <experiments>3</experiments>
</comment>
<comment type="interaction">
    <interactant intactId="EBI-923440">
        <id>Q8WXI9</id>
    </interactant>
    <interactant intactId="EBI-1053424">
        <id>O43741</id>
        <label>PRKAB2</label>
    </interactant>
    <organismsDiffer>false</organismsDiffer>
    <experiments>4</experiments>
</comment>
<comment type="interaction">
    <interactant intactId="EBI-923440">
        <id>Q8WXI9</id>
    </interactant>
    <interactant intactId="EBI-1050213">
        <id>Q96KN7</id>
        <label>RPGRIP1</label>
    </interactant>
    <organismsDiffer>false</organismsDiffer>
    <experiments>3</experiments>
</comment>
<comment type="interaction">
    <interactant intactId="EBI-923440">
        <id>Q8WXI9</id>
    </interactant>
    <interactant intactId="EBI-17181801">
        <id>P0C264</id>
        <label>SBK3</label>
    </interactant>
    <organismsDiffer>false</organismsDiffer>
    <experiments>3</experiments>
</comment>
<comment type="interaction">
    <interactant intactId="EBI-923440">
        <id>Q8WXI9</id>
    </interactant>
    <interactant intactId="EBI-742397">
        <id>Q8IYF3</id>
        <label>TEX11</label>
    </interactant>
    <organismsDiffer>false</organismsDiffer>
    <experiments>3</experiments>
</comment>
<comment type="interaction">
    <interactant intactId="EBI-923440">
        <id>Q8WXI9</id>
    </interactant>
    <interactant intactId="EBI-359224">
        <id>Q13077</id>
        <label>TRAF1</label>
    </interactant>
    <organismsDiffer>false</organismsDiffer>
    <experiments>4</experiments>
</comment>
<comment type="interaction">
    <interactant intactId="EBI-923440">
        <id>Q8WXI9</id>
    </interactant>
    <interactant intactId="EBI-719493">
        <id>P14373</id>
        <label>TRIM27</label>
    </interactant>
    <organismsDiffer>false</organismsDiffer>
    <experiments>3</experiments>
</comment>
<comment type="interaction">
    <interactant intactId="EBI-923440">
        <id>Q8WXI9</id>
    </interactant>
    <interactant intactId="EBI-739895">
        <id>Q8N6Y0</id>
        <label>USHBP1</label>
    </interactant>
    <organismsDiffer>false</organismsDiffer>
    <experiments>3</experiments>
</comment>
<comment type="interaction">
    <interactant intactId="EBI-923440">
        <id>Q8WXI9</id>
    </interactant>
    <interactant intactId="EBI-2795384">
        <id>O95365</id>
        <label>ZBTB7A</label>
    </interactant>
    <organismsDiffer>false</organismsDiffer>
    <experiments>4</experiments>
</comment>
<comment type="interaction">
    <interactant intactId="EBI-923440">
        <id>Q8WXI9</id>
    </interactant>
    <interactant intactId="EBI-10183064">
        <id>Q8N5A5-2</id>
        <label>ZGPAT</label>
    </interactant>
    <organismsDiffer>false</organismsDiffer>
    <experiments>3</experiments>
</comment>
<comment type="interaction">
    <interactant intactId="EBI-923440">
        <id>Q8WXI9</id>
    </interactant>
    <interactant intactId="EBI-5564776">
        <id>Q17R98</id>
        <label>ZNF827</label>
    </interactant>
    <organismsDiffer>false</organismsDiffer>
    <experiments>2</experiments>
</comment>
<comment type="subcellular location">
    <subcellularLocation>
        <location evidence="5 6 7">Nucleus speckle</location>
    </subcellularLocation>
    <subcellularLocation>
        <location evidence="12 13 14">Nucleus</location>
    </subcellularLocation>
    <subcellularLocation>
        <location evidence="12">Chromosome</location>
    </subcellularLocation>
    <text evidence="7 12">Speckled nuclear localization requires both CR1 and CR2 regions (PubMed:16415179). Localizes to sites of DNA damage (PubMed:27732854).</text>
</comment>
<comment type="tissue specificity">
    <text evidence="6">Widely expressed.</text>
</comment>
<comment type="domain">
    <text evidence="7">Both CR1 and CR2 regions are required for speckled nuclear localization.</text>
</comment>
<comment type="disease" evidence="9 10">
    <disease id="DI-03650">
        <name>Gand syndrome</name>
        <acronym>GAND</acronym>
        <description>An autosomal dominant syndrome characterized by global developmental delay with motor delay, moderate to severely impaired intellectual development, and poor speech acquisition in most patients. Additional features include hypotonia, feeding difficulties in infancy, and dysmorphic features. More variable features may include seizures, cardiac abnormalities, and non-specific findings on brain imaging.</description>
        <dbReference type="MIM" id="615074"/>
    </disease>
    <text>The disease is caused by variants affecting the gene represented in this entry.</text>
</comment>
<evidence type="ECO:0000250" key="1">
    <source>
        <dbReference type="UniProtKB" id="Q8VHR5"/>
    </source>
</evidence>
<evidence type="ECO:0000255" key="2"/>
<evidence type="ECO:0000255" key="3">
    <source>
        <dbReference type="PROSITE-ProRule" id="PRU00094"/>
    </source>
</evidence>
<evidence type="ECO:0000256" key="4">
    <source>
        <dbReference type="SAM" id="MobiDB-lite"/>
    </source>
</evidence>
<evidence type="ECO:0000269" key="5">
    <source>
    </source>
</evidence>
<evidence type="ECO:0000269" key="6">
    <source>
    </source>
</evidence>
<evidence type="ECO:0000269" key="7">
    <source>
    </source>
</evidence>
<evidence type="ECO:0000269" key="8">
    <source>
    </source>
</evidence>
<evidence type="ECO:0000269" key="9">
    <source>
    </source>
</evidence>
<evidence type="ECO:0000269" key="10">
    <source>
    </source>
</evidence>
<evidence type="ECO:0000269" key="11">
    <source>
    </source>
</evidence>
<evidence type="ECO:0000269" key="12">
    <source>
    </source>
</evidence>
<evidence type="ECO:0000269" key="13">
    <source>
    </source>
</evidence>
<evidence type="ECO:0000269" key="14">
    <source>
    </source>
</evidence>
<evidence type="ECO:0007744" key="15">
    <source>
    </source>
</evidence>
<evidence type="ECO:0007744" key="16">
    <source>
    </source>
</evidence>
<evidence type="ECO:0007744" key="17">
    <source>
    </source>
</evidence>
<evidence type="ECO:0007744" key="18">
    <source>
    </source>
</evidence>
<evidence type="ECO:0007744" key="19">
    <source>
    </source>
</evidence>
<evidence type="ECO:0007744" key="20">
    <source>
    </source>
</evidence>
<evidence type="ECO:0007744" key="21">
    <source>
    </source>
</evidence>
<evidence type="ECO:0007744" key="22">
    <source>
    </source>
</evidence>
<evidence type="ECO:0007744" key="23">
    <source>
    </source>
</evidence>
<organism>
    <name type="scientific">Homo sapiens</name>
    <name type="common">Human</name>
    <dbReference type="NCBI Taxonomy" id="9606"/>
    <lineage>
        <taxon>Eukaryota</taxon>
        <taxon>Metazoa</taxon>
        <taxon>Chordata</taxon>
        <taxon>Craniata</taxon>
        <taxon>Vertebrata</taxon>
        <taxon>Euteleostomi</taxon>
        <taxon>Mammalia</taxon>
        <taxon>Eutheria</taxon>
        <taxon>Euarchontoglires</taxon>
        <taxon>Primates</taxon>
        <taxon>Haplorrhini</taxon>
        <taxon>Catarrhini</taxon>
        <taxon>Hominidae</taxon>
        <taxon>Homo</taxon>
    </lineage>
</organism>
<dbReference type="EMBL" id="AF411836">
    <property type="protein sequence ID" value="AAL39080.1"/>
    <property type="molecule type" value="mRNA"/>
</dbReference>
<dbReference type="EMBL" id="AL513523">
    <property type="status" value="NOT_ANNOTATED_CDS"/>
    <property type="molecule type" value="Genomic_DNA"/>
</dbReference>
<dbReference type="EMBL" id="CH471121">
    <property type="protein sequence ID" value="EAW53270.1"/>
    <property type="molecule type" value="Genomic_DNA"/>
</dbReference>
<dbReference type="EMBL" id="BC069419">
    <property type="protein sequence ID" value="AAH69419.1"/>
    <property type="molecule type" value="mRNA"/>
</dbReference>
<dbReference type="EMBL" id="BC112052">
    <property type="protein sequence ID" value="AAI12053.1"/>
    <property type="molecule type" value="mRNA"/>
</dbReference>
<dbReference type="EMBL" id="BC112080">
    <property type="protein sequence ID" value="AAI12081.1"/>
    <property type="molecule type" value="mRNA"/>
</dbReference>
<dbReference type="EMBL" id="AB032976">
    <property type="protein sequence ID" value="BAA86464.1"/>
    <property type="molecule type" value="mRNA"/>
</dbReference>
<dbReference type="CCDS" id="CCDS1054.1"/>
<dbReference type="RefSeq" id="NP_065750.1">
    <property type="nucleotide sequence ID" value="NM_020699.4"/>
</dbReference>
<dbReference type="RefSeq" id="XP_005245421.1">
    <property type="nucleotide sequence ID" value="XM_005245364.4"/>
</dbReference>
<dbReference type="RefSeq" id="XP_047282073.1">
    <property type="nucleotide sequence ID" value="XM_047426117.1"/>
</dbReference>
<dbReference type="RefSeq" id="XP_054193790.1">
    <property type="nucleotide sequence ID" value="XM_054337815.1"/>
</dbReference>
<dbReference type="SMR" id="Q8WXI9"/>
<dbReference type="BioGRID" id="121529">
    <property type="interactions" value="276"/>
</dbReference>
<dbReference type="ComplexPortal" id="CPX-880">
    <property type="entry name" value="MBD2/NuRD nucleosome remodeling and deacetylase complex"/>
</dbReference>
<dbReference type="ComplexPortal" id="CPX-922">
    <property type="entry name" value="MBD3/NuRD nucleosome remodeling and deacetylase complex"/>
</dbReference>
<dbReference type="CORUM" id="Q8WXI9"/>
<dbReference type="DIP" id="DIP-36054N"/>
<dbReference type="FunCoup" id="Q8WXI9">
    <property type="interactions" value="2625"/>
</dbReference>
<dbReference type="IntAct" id="Q8WXI9">
    <property type="interactions" value="143"/>
</dbReference>
<dbReference type="MINT" id="Q8WXI9"/>
<dbReference type="STRING" id="9606.ENSP00000357644"/>
<dbReference type="GlyConnect" id="2882">
    <property type="glycosylation" value="1 O-GlcNAc glycan (1 site)"/>
</dbReference>
<dbReference type="GlyCosmos" id="Q8WXI9">
    <property type="glycosylation" value="10 sites, 2 glycans"/>
</dbReference>
<dbReference type="GlyGen" id="Q8WXI9">
    <property type="glycosylation" value="18 sites, 2 O-linked glycans (18 sites)"/>
</dbReference>
<dbReference type="iPTMnet" id="Q8WXI9"/>
<dbReference type="MetOSite" id="Q8WXI9"/>
<dbReference type="PhosphoSitePlus" id="Q8WXI9"/>
<dbReference type="SwissPalm" id="Q8WXI9"/>
<dbReference type="BioMuta" id="GATAD2B"/>
<dbReference type="DMDM" id="50401096"/>
<dbReference type="jPOST" id="Q8WXI9"/>
<dbReference type="MassIVE" id="Q8WXI9"/>
<dbReference type="PaxDb" id="9606-ENSP00000357644"/>
<dbReference type="PeptideAtlas" id="Q8WXI9"/>
<dbReference type="ProteomicsDB" id="75070"/>
<dbReference type="Pumba" id="Q8WXI9"/>
<dbReference type="Antibodypedia" id="1795">
    <property type="antibodies" value="277 antibodies from 30 providers"/>
</dbReference>
<dbReference type="DNASU" id="57459"/>
<dbReference type="Ensembl" id="ENST00000368655.5">
    <property type="protein sequence ID" value="ENSP00000357644.4"/>
    <property type="gene ID" value="ENSG00000143614.11"/>
</dbReference>
<dbReference type="Ensembl" id="ENST00000576342.2">
    <property type="protein sequence ID" value="ENSP00000458280.1"/>
    <property type="gene ID" value="ENSG00000261992.2"/>
</dbReference>
<dbReference type="Ensembl" id="ENST00000634544.1">
    <property type="protein sequence ID" value="ENSP00000489184.1"/>
    <property type="gene ID" value="ENSG00000143614.11"/>
</dbReference>
<dbReference type="GeneID" id="57459"/>
<dbReference type="KEGG" id="hsa:57459"/>
<dbReference type="MANE-Select" id="ENST00000368655.5">
    <property type="protein sequence ID" value="ENSP00000357644.4"/>
    <property type="RefSeq nucleotide sequence ID" value="NM_020699.4"/>
    <property type="RefSeq protein sequence ID" value="NP_065750.1"/>
</dbReference>
<dbReference type="UCSC" id="uc001fdb.5">
    <property type="organism name" value="human"/>
</dbReference>
<dbReference type="AGR" id="HGNC:30778"/>
<dbReference type="CTD" id="57459"/>
<dbReference type="DisGeNET" id="57459"/>
<dbReference type="GeneCards" id="GATAD2B"/>
<dbReference type="HGNC" id="HGNC:30778">
    <property type="gene designation" value="GATAD2B"/>
</dbReference>
<dbReference type="HPA" id="ENSG00000143614">
    <property type="expression patterns" value="Low tissue specificity"/>
</dbReference>
<dbReference type="MalaCards" id="GATAD2B"/>
<dbReference type="MIM" id="614998">
    <property type="type" value="gene"/>
</dbReference>
<dbReference type="MIM" id="615074">
    <property type="type" value="phenotype"/>
</dbReference>
<dbReference type="neXtProt" id="NX_Q8WXI9"/>
<dbReference type="OpenTargets" id="ENSG00000143614"/>
<dbReference type="Orphanet" id="363686">
    <property type="disease" value="Severe intellectual disability-poor language-strabismus-grimacing face-long fingers syndrome"/>
</dbReference>
<dbReference type="PharmGKB" id="PA142671747"/>
<dbReference type="VEuPathDB" id="HostDB:ENSG00000143614"/>
<dbReference type="eggNOG" id="KOG3740">
    <property type="taxonomic scope" value="Eukaryota"/>
</dbReference>
<dbReference type="GeneTree" id="ENSGT00390000004097"/>
<dbReference type="HOGENOM" id="CLU_014315_2_0_1"/>
<dbReference type="InParanoid" id="Q8WXI9"/>
<dbReference type="OMA" id="RCDADHD"/>
<dbReference type="OrthoDB" id="7331812at2759"/>
<dbReference type="PAN-GO" id="Q8WXI9">
    <property type="GO annotations" value="2 GO annotations based on evolutionary models"/>
</dbReference>
<dbReference type="PhylomeDB" id="Q8WXI9"/>
<dbReference type="TreeFam" id="TF321369"/>
<dbReference type="PathwayCommons" id="Q8WXI9"/>
<dbReference type="Reactome" id="R-HSA-3214815">
    <property type="pathway name" value="HDACs deacetylate histones"/>
</dbReference>
<dbReference type="Reactome" id="R-HSA-427389">
    <property type="pathway name" value="ERCC6 (CSB) and EHMT2 (G9a) positively regulate rRNA expression"/>
</dbReference>
<dbReference type="Reactome" id="R-HSA-6804758">
    <property type="pathway name" value="Regulation of TP53 Activity through Acetylation"/>
</dbReference>
<dbReference type="Reactome" id="R-HSA-73762">
    <property type="pathway name" value="RNA Polymerase I Transcription Initiation"/>
</dbReference>
<dbReference type="Reactome" id="R-HSA-8943724">
    <property type="pathway name" value="Regulation of PTEN gene transcription"/>
</dbReference>
<dbReference type="Reactome" id="R-HSA-9679191">
    <property type="pathway name" value="Potential therapeutics for SARS"/>
</dbReference>
<dbReference type="Reactome" id="R-HSA-9843940">
    <property type="pathway name" value="Regulation of endogenous retroelements by KRAB-ZFP proteins"/>
</dbReference>
<dbReference type="Reactome" id="R-HSA-9844594">
    <property type="pathway name" value="Transcriptional regulation of brown and beige adipocyte differentiation by EBF2"/>
</dbReference>
<dbReference type="Reactome" id="R-HSA-9845323">
    <property type="pathway name" value="Regulation of endogenous retroelements by Piwi-interacting RNAs (piRNAs)"/>
</dbReference>
<dbReference type="SignaLink" id="Q8WXI9"/>
<dbReference type="SIGNOR" id="Q8WXI9"/>
<dbReference type="BioGRID-ORCS" id="57459">
    <property type="hits" value="33 hits in 1177 CRISPR screens"/>
</dbReference>
<dbReference type="CD-CODE" id="804901D1">
    <property type="entry name" value="Nuclear speckle"/>
</dbReference>
<dbReference type="ChiTaRS" id="GATAD2B">
    <property type="organism name" value="human"/>
</dbReference>
<dbReference type="GeneWiki" id="GATAD2B"/>
<dbReference type="GenomeRNAi" id="57459"/>
<dbReference type="Pharos" id="Q8WXI9">
    <property type="development level" value="Tbio"/>
</dbReference>
<dbReference type="PRO" id="PR:Q8WXI9"/>
<dbReference type="Proteomes" id="UP000005640">
    <property type="component" value="Chromosome 1"/>
</dbReference>
<dbReference type="RNAct" id="Q8WXI9">
    <property type="molecule type" value="protein"/>
</dbReference>
<dbReference type="Bgee" id="ENSG00000143614">
    <property type="expression patterns" value="Expressed in colonic epithelium and 105 other cell types or tissues"/>
</dbReference>
<dbReference type="ExpressionAtlas" id="Q8WXI9">
    <property type="expression patterns" value="baseline and differential"/>
</dbReference>
<dbReference type="GO" id="GO:0000785">
    <property type="term" value="C:chromatin"/>
    <property type="evidence" value="ECO:0007005"/>
    <property type="project" value="UniProtKB"/>
</dbReference>
<dbReference type="GO" id="GO:0000781">
    <property type="term" value="C:chromosome, telomeric region"/>
    <property type="evidence" value="ECO:0000314"/>
    <property type="project" value="UniProtKB"/>
</dbReference>
<dbReference type="GO" id="GO:0016607">
    <property type="term" value="C:nuclear speck"/>
    <property type="evidence" value="ECO:0007669"/>
    <property type="project" value="UniProtKB-SubCell"/>
</dbReference>
<dbReference type="GO" id="GO:0005654">
    <property type="term" value="C:nucleoplasm"/>
    <property type="evidence" value="ECO:0000314"/>
    <property type="project" value="HPA"/>
</dbReference>
<dbReference type="GO" id="GO:0005634">
    <property type="term" value="C:nucleus"/>
    <property type="evidence" value="ECO:0000314"/>
    <property type="project" value="UniProtKB"/>
</dbReference>
<dbReference type="GO" id="GO:0016581">
    <property type="term" value="C:NuRD complex"/>
    <property type="evidence" value="ECO:0000314"/>
    <property type="project" value="UniProtKB"/>
</dbReference>
<dbReference type="GO" id="GO:0032991">
    <property type="term" value="C:protein-containing complex"/>
    <property type="evidence" value="ECO:0007005"/>
    <property type="project" value="UniProtKB"/>
</dbReference>
<dbReference type="GO" id="GO:0043565">
    <property type="term" value="F:sequence-specific DNA binding"/>
    <property type="evidence" value="ECO:0007669"/>
    <property type="project" value="InterPro"/>
</dbReference>
<dbReference type="GO" id="GO:0008270">
    <property type="term" value="F:zinc ion binding"/>
    <property type="evidence" value="ECO:0007669"/>
    <property type="project" value="UniProtKB-KW"/>
</dbReference>
<dbReference type="GO" id="GO:0006338">
    <property type="term" value="P:chromatin remodeling"/>
    <property type="evidence" value="ECO:0000314"/>
    <property type="project" value="ComplexPortal"/>
</dbReference>
<dbReference type="GO" id="GO:0045892">
    <property type="term" value="P:negative regulation of DNA-templated transcription"/>
    <property type="evidence" value="ECO:0000303"/>
    <property type="project" value="ComplexPortal"/>
</dbReference>
<dbReference type="GO" id="GO:0000122">
    <property type="term" value="P:negative regulation of transcription by RNA polymerase II"/>
    <property type="evidence" value="ECO:0000318"/>
    <property type="project" value="GO_Central"/>
</dbReference>
<dbReference type="GO" id="GO:0045893">
    <property type="term" value="P:positive regulation of DNA-templated transcription"/>
    <property type="evidence" value="ECO:0000303"/>
    <property type="project" value="ComplexPortal"/>
</dbReference>
<dbReference type="GO" id="GO:0042659">
    <property type="term" value="P:regulation of cell fate specification"/>
    <property type="evidence" value="ECO:0000303"/>
    <property type="project" value="ComplexPortal"/>
</dbReference>
<dbReference type="GO" id="GO:2000736">
    <property type="term" value="P:regulation of stem cell differentiation"/>
    <property type="evidence" value="ECO:0000303"/>
    <property type="project" value="ComplexPortal"/>
</dbReference>
<dbReference type="Gene3D" id="6.10.250.1650">
    <property type="match status" value="1"/>
</dbReference>
<dbReference type="Gene3D" id="3.30.50.10">
    <property type="entry name" value="Erythroid Transcription Factor GATA-1, subunit A"/>
    <property type="match status" value="1"/>
</dbReference>
<dbReference type="InterPro" id="IPR040386">
    <property type="entry name" value="P66"/>
</dbReference>
<dbReference type="InterPro" id="IPR032346">
    <property type="entry name" value="P66_CC"/>
</dbReference>
<dbReference type="InterPro" id="IPR000679">
    <property type="entry name" value="Znf_GATA"/>
</dbReference>
<dbReference type="InterPro" id="IPR013088">
    <property type="entry name" value="Znf_NHR/GATA"/>
</dbReference>
<dbReference type="PANTHER" id="PTHR13455:SF4">
    <property type="entry name" value="TRANSCRIPTIONAL REPRESSOR P66-BETA"/>
    <property type="match status" value="1"/>
</dbReference>
<dbReference type="PANTHER" id="PTHR13455">
    <property type="entry name" value="TRANSCRIPTIONAL REPRESSOR P66-RELATED"/>
    <property type="match status" value="1"/>
</dbReference>
<dbReference type="Pfam" id="PF00320">
    <property type="entry name" value="GATA"/>
    <property type="match status" value="1"/>
</dbReference>
<dbReference type="Pfam" id="PF16563">
    <property type="entry name" value="P66_CC"/>
    <property type="match status" value="1"/>
</dbReference>
<dbReference type="SUPFAM" id="SSF57716">
    <property type="entry name" value="Glucocorticoid receptor-like (DNA-binding domain)"/>
    <property type="match status" value="1"/>
</dbReference>
<dbReference type="PROSITE" id="PS50114">
    <property type="entry name" value="GATA_ZN_FINGER_2"/>
    <property type="match status" value="1"/>
</dbReference>